<comment type="function">
    <text evidence="1">Heme chaperone required for the biogenesis of c-type cytochromes. Transiently binds heme delivered by CcmC and transfers the heme to apo-cytochromes in a process facilitated by CcmF and CcmH.</text>
</comment>
<comment type="subcellular location">
    <subcellularLocation>
        <location evidence="1">Cell inner membrane</location>
        <topology evidence="1">Single-pass type II membrane protein</topology>
        <orientation evidence="1">Periplasmic side</orientation>
    </subcellularLocation>
</comment>
<comment type="similarity">
    <text evidence="1">Belongs to the CcmE/CycJ family.</text>
</comment>
<accession>Q0AR54</accession>
<evidence type="ECO:0000255" key="1">
    <source>
        <dbReference type="HAMAP-Rule" id="MF_01959"/>
    </source>
</evidence>
<evidence type="ECO:0000256" key="2">
    <source>
        <dbReference type="SAM" id="MobiDB-lite"/>
    </source>
</evidence>
<gene>
    <name evidence="1" type="primary">ccmE</name>
    <name evidence="1" type="synonym">cycJ</name>
    <name type="ordered locus">Mmar10_0940</name>
</gene>
<dbReference type="EMBL" id="CP000449">
    <property type="protein sequence ID" value="ABI65233.1"/>
    <property type="molecule type" value="Genomic_DNA"/>
</dbReference>
<dbReference type="RefSeq" id="WP_011642880.1">
    <property type="nucleotide sequence ID" value="NC_008347.1"/>
</dbReference>
<dbReference type="SMR" id="Q0AR54"/>
<dbReference type="STRING" id="394221.Mmar10_0940"/>
<dbReference type="KEGG" id="mmr:Mmar10_0940"/>
<dbReference type="eggNOG" id="COG2332">
    <property type="taxonomic scope" value="Bacteria"/>
</dbReference>
<dbReference type="HOGENOM" id="CLU_079503_1_1_5"/>
<dbReference type="Proteomes" id="UP000001964">
    <property type="component" value="Chromosome"/>
</dbReference>
<dbReference type="GO" id="GO:0005886">
    <property type="term" value="C:plasma membrane"/>
    <property type="evidence" value="ECO:0007669"/>
    <property type="project" value="UniProtKB-SubCell"/>
</dbReference>
<dbReference type="GO" id="GO:0020037">
    <property type="term" value="F:heme binding"/>
    <property type="evidence" value="ECO:0007669"/>
    <property type="project" value="InterPro"/>
</dbReference>
<dbReference type="GO" id="GO:0046872">
    <property type="term" value="F:metal ion binding"/>
    <property type="evidence" value="ECO:0007669"/>
    <property type="project" value="UniProtKB-KW"/>
</dbReference>
<dbReference type="GO" id="GO:0017004">
    <property type="term" value="P:cytochrome complex assembly"/>
    <property type="evidence" value="ECO:0007669"/>
    <property type="project" value="UniProtKB-KW"/>
</dbReference>
<dbReference type="Gene3D" id="2.40.50.140">
    <property type="entry name" value="Nucleic acid-binding proteins"/>
    <property type="match status" value="1"/>
</dbReference>
<dbReference type="HAMAP" id="MF_01959">
    <property type="entry name" value="CcmE"/>
    <property type="match status" value="1"/>
</dbReference>
<dbReference type="InterPro" id="IPR004329">
    <property type="entry name" value="CcmE"/>
</dbReference>
<dbReference type="InterPro" id="IPR036127">
    <property type="entry name" value="CcmE-like_sf"/>
</dbReference>
<dbReference type="InterPro" id="IPR012340">
    <property type="entry name" value="NA-bd_OB-fold"/>
</dbReference>
<dbReference type="NCBIfam" id="NF009727">
    <property type="entry name" value="PRK13254.1-1"/>
    <property type="match status" value="1"/>
</dbReference>
<dbReference type="NCBIfam" id="NF009731">
    <property type="entry name" value="PRK13254.1-5"/>
    <property type="match status" value="1"/>
</dbReference>
<dbReference type="PANTHER" id="PTHR34128">
    <property type="entry name" value="CYTOCHROME C-TYPE BIOGENESIS PROTEIN CCME HOMOLOG, MITOCHONDRIAL"/>
    <property type="match status" value="1"/>
</dbReference>
<dbReference type="PANTHER" id="PTHR34128:SF2">
    <property type="entry name" value="CYTOCHROME C-TYPE BIOGENESIS PROTEIN CCME HOMOLOG, MITOCHONDRIAL"/>
    <property type="match status" value="1"/>
</dbReference>
<dbReference type="Pfam" id="PF03100">
    <property type="entry name" value="CcmE"/>
    <property type="match status" value="1"/>
</dbReference>
<dbReference type="SUPFAM" id="SSF82093">
    <property type="entry name" value="Heme chaperone CcmE"/>
    <property type="match status" value="1"/>
</dbReference>
<feature type="chain" id="PRO_1000070823" description="Cytochrome c-type biogenesis protein CcmE">
    <location>
        <begin position="1"/>
        <end position="158"/>
    </location>
</feature>
<feature type="topological domain" description="Cytoplasmic" evidence="1">
    <location>
        <begin position="1"/>
        <end position="8"/>
    </location>
</feature>
<feature type="transmembrane region" description="Helical; Signal-anchor for type II membrane protein" evidence="1">
    <location>
        <begin position="9"/>
        <end position="29"/>
    </location>
</feature>
<feature type="topological domain" description="Periplasmic" evidence="1">
    <location>
        <begin position="30"/>
        <end position="158"/>
    </location>
</feature>
<feature type="region of interest" description="Disordered" evidence="2">
    <location>
        <begin position="139"/>
        <end position="158"/>
    </location>
</feature>
<feature type="binding site" description="covalent" evidence="1">
    <location>
        <position position="123"/>
    </location>
    <ligand>
        <name>heme</name>
        <dbReference type="ChEBI" id="CHEBI:30413"/>
    </ligand>
</feature>
<feature type="binding site" description="axial binding residue" evidence="1">
    <location>
        <position position="127"/>
    </location>
    <ligand>
        <name>heme</name>
        <dbReference type="ChEBI" id="CHEBI:30413"/>
    </ligand>
    <ligandPart>
        <name>Fe</name>
        <dbReference type="ChEBI" id="CHEBI:18248"/>
    </ligandPart>
</feature>
<proteinExistence type="inferred from homology"/>
<sequence>MMRHRNRRLATIAASAIVLVVAVGLGLMALRSAVVFFYSPSEIAAEHPGIEARIRVGGLVLEESVGEAASGATRFVITDRVENVQVEYAGLLPDLFREGQGVVVEGRFAADGVLQARTVLAKHDETYMPPEVAEALREAGVWQGEGETPSAAGDGDSR</sequence>
<name>CCME_MARMM</name>
<protein>
    <recommendedName>
        <fullName evidence="1">Cytochrome c-type biogenesis protein CcmE</fullName>
    </recommendedName>
    <alternativeName>
        <fullName evidence="1">Cytochrome c maturation protein E</fullName>
    </alternativeName>
    <alternativeName>
        <fullName evidence="1">Heme chaperone CcmE</fullName>
    </alternativeName>
</protein>
<organism>
    <name type="scientific">Maricaulis maris (strain MCS10)</name>
    <name type="common">Caulobacter maris</name>
    <dbReference type="NCBI Taxonomy" id="394221"/>
    <lineage>
        <taxon>Bacteria</taxon>
        <taxon>Pseudomonadati</taxon>
        <taxon>Pseudomonadota</taxon>
        <taxon>Alphaproteobacteria</taxon>
        <taxon>Maricaulales</taxon>
        <taxon>Maricaulaceae</taxon>
        <taxon>Maricaulis</taxon>
    </lineage>
</organism>
<reference key="1">
    <citation type="submission" date="2006-08" db="EMBL/GenBank/DDBJ databases">
        <title>Complete sequence of Maricaulis maris MCS10.</title>
        <authorList>
            <consortium name="US DOE Joint Genome Institute"/>
            <person name="Copeland A."/>
            <person name="Lucas S."/>
            <person name="Lapidus A."/>
            <person name="Barry K."/>
            <person name="Detter J.C."/>
            <person name="Glavina del Rio T."/>
            <person name="Hammon N."/>
            <person name="Israni S."/>
            <person name="Dalin E."/>
            <person name="Tice H."/>
            <person name="Pitluck S."/>
            <person name="Saunders E."/>
            <person name="Brettin T."/>
            <person name="Bruce D."/>
            <person name="Han C."/>
            <person name="Tapia R."/>
            <person name="Gilna P."/>
            <person name="Schmutz J."/>
            <person name="Larimer F."/>
            <person name="Land M."/>
            <person name="Hauser L."/>
            <person name="Kyrpides N."/>
            <person name="Mikhailova N."/>
            <person name="Viollier P."/>
            <person name="Stephens C."/>
            <person name="Richardson P."/>
        </authorList>
    </citation>
    <scope>NUCLEOTIDE SEQUENCE [LARGE SCALE GENOMIC DNA]</scope>
    <source>
        <strain>MCS10</strain>
    </source>
</reference>
<keyword id="KW-0997">Cell inner membrane</keyword>
<keyword id="KW-1003">Cell membrane</keyword>
<keyword id="KW-0201">Cytochrome c-type biogenesis</keyword>
<keyword id="KW-0349">Heme</keyword>
<keyword id="KW-0408">Iron</keyword>
<keyword id="KW-0472">Membrane</keyword>
<keyword id="KW-0479">Metal-binding</keyword>
<keyword id="KW-1185">Reference proteome</keyword>
<keyword id="KW-0735">Signal-anchor</keyword>
<keyword id="KW-0812">Transmembrane</keyword>
<keyword id="KW-1133">Transmembrane helix</keyword>